<comment type="function">
    <text evidence="1">Plays a role in lysophospholipid acylation. Transfers fatty acids to the 1-position via an enzyme-bound acyl-ACP intermediate in the presence of ATP and magnesium. Its physiological function is to regenerate phosphatidylethanolamine from 2-acyl-glycero-3-phosphoethanolamine (2-acyl-GPE) formed by transacylation reactions or degradation by phospholipase A1.</text>
</comment>
<comment type="catalytic activity">
    <reaction evidence="1">
        <text>a 2-acyl-sn-glycero-3-phosphoethanolamine + a fatty acyl-[ACP] = a 1,2-diacyl-sn-glycero-3-phosphoethanolamine + holo-[ACP]</text>
        <dbReference type="Rhea" id="RHEA:10304"/>
        <dbReference type="Rhea" id="RHEA-COMP:9685"/>
        <dbReference type="Rhea" id="RHEA-COMP:14125"/>
        <dbReference type="ChEBI" id="CHEBI:64479"/>
        <dbReference type="ChEBI" id="CHEBI:64612"/>
        <dbReference type="ChEBI" id="CHEBI:65213"/>
        <dbReference type="ChEBI" id="CHEBI:138651"/>
        <dbReference type="EC" id="2.3.1.40"/>
    </reaction>
</comment>
<comment type="catalytic activity">
    <reaction evidence="1">
        <text>a long-chain fatty acid + holo-[ACP] + ATP = a long-chain fatty acyl-[ACP] + AMP + diphosphate</text>
        <dbReference type="Rhea" id="RHEA:45588"/>
        <dbReference type="Rhea" id="RHEA-COMP:9685"/>
        <dbReference type="Rhea" id="RHEA-COMP:12682"/>
        <dbReference type="ChEBI" id="CHEBI:30616"/>
        <dbReference type="ChEBI" id="CHEBI:33019"/>
        <dbReference type="ChEBI" id="CHEBI:57560"/>
        <dbReference type="ChEBI" id="CHEBI:64479"/>
        <dbReference type="ChEBI" id="CHEBI:133243"/>
        <dbReference type="ChEBI" id="CHEBI:456215"/>
        <dbReference type="EC" id="6.2.1.20"/>
    </reaction>
</comment>
<comment type="subcellular location">
    <subcellularLocation>
        <location evidence="1">Cell inner membrane</location>
        <topology evidence="1">Multi-pass membrane protein</topology>
    </subcellularLocation>
</comment>
<comment type="similarity">
    <text evidence="1">In the N-terminal section; belongs to the 2-acyl-GPE acetyltransferase family.</text>
</comment>
<comment type="similarity">
    <text evidence="1">In the C-terminal section; belongs to the ATP-dependent AMP-binding enzyme family.</text>
</comment>
<protein>
    <recommendedName>
        <fullName evidence="1">Bifunctional protein Aas</fullName>
    </recommendedName>
    <domain>
        <recommendedName>
            <fullName evidence="1">2-acylglycerophosphoethanolamine acyltransferase</fullName>
            <ecNumber evidence="1">2.3.1.40</ecNumber>
        </recommendedName>
        <alternativeName>
            <fullName evidence="1">2-acyl-GPE acyltransferase</fullName>
        </alternativeName>
        <alternativeName>
            <fullName evidence="1">Acyl-[acyl-carrier-protein]--phospholipid O-acyltransferase</fullName>
        </alternativeName>
    </domain>
    <domain>
        <recommendedName>
            <fullName evidence="1">Acyl-[acyl-carrier-protein] synthetase</fullName>
            <ecNumber evidence="1">6.2.1.20</ecNumber>
        </recommendedName>
        <alternativeName>
            <fullName evidence="1">Acyl-ACP synthetase</fullName>
        </alternativeName>
        <alternativeName>
            <fullName evidence="1">Long-chain-fatty-acid--[acyl-carrier-protein] ligase</fullName>
        </alternativeName>
    </domain>
</protein>
<sequence length="719" mass="80520">MLFGFFRNLFRVLYRVRVTGDVRALQGNRVLITPNHVSFIDGMLLALFLPVRPVFAVYTSISQQWYMRWLTPLIDFVPLDPTKPMSIKHLVRLVEQGRPVVIFPEGRISVTGSLMKIYDGAGFVAAKSGATVIPLRIDGAELTPFSRLKGLVKRRLFPRIQLHILPPTQIPMPEAPRARDRRKIAGEMLHQIMMEARMAVRPRETLYESLLAAQYRYGAGKNCIEDINFTPDTYRKLLTKKLFVGRILEKYSVEGEKIGLMLPNAAISAAVIFGAVSRRRIPAMMNYTAGVKGLTSAITAAEIKTIFTSRQFLDKGKLWHLPEQLTQVRWVYLEDLKADVTPADKLWIFAHLLAPRLAQVKQQPEDAAIILFTSGSEGHPKGVVHSHKSILANVEQIKTIADFTANDRFMSALPLFHSFGLTVGLFTPLLTGAEVFLYPSPLHYRIVPELVYDRNCTVLFGTSTFLGNYARFANPYDFYRLRYVVAGAEKLQESTKQLWQDKFGLRILEGYGVTECAPVVSINVPMAAKPGTVGRILPGMDARLLAVPGIENGGRLQLKGPNIMNGYLRVEKPGVLEVPSAENARGETERGWYDTGDIVRFDENGFVQIQGRAKRFAKIAGEMVSLEMVEQLALGVSADKMHATAIKSDASKGEALVLFTTDSELTREKLQHYAREHGIPELAVPRDIRYLKQLPLLGSGKPDFVTLKSWVDAPEQHHE</sequence>
<gene>
    <name evidence="1" type="primary">aas</name>
    <name type="ordered locus">SeSA_A3175</name>
</gene>
<accession>B4TUM9</accession>
<organism>
    <name type="scientific">Salmonella schwarzengrund (strain CVM19633)</name>
    <dbReference type="NCBI Taxonomy" id="439843"/>
    <lineage>
        <taxon>Bacteria</taxon>
        <taxon>Pseudomonadati</taxon>
        <taxon>Pseudomonadota</taxon>
        <taxon>Gammaproteobacteria</taxon>
        <taxon>Enterobacterales</taxon>
        <taxon>Enterobacteriaceae</taxon>
        <taxon>Salmonella</taxon>
    </lineage>
</organism>
<reference key="1">
    <citation type="journal article" date="2011" name="J. Bacteriol.">
        <title>Comparative genomics of 28 Salmonella enterica isolates: evidence for CRISPR-mediated adaptive sublineage evolution.</title>
        <authorList>
            <person name="Fricke W.F."/>
            <person name="Mammel M.K."/>
            <person name="McDermott P.F."/>
            <person name="Tartera C."/>
            <person name="White D.G."/>
            <person name="Leclerc J.E."/>
            <person name="Ravel J."/>
            <person name="Cebula T.A."/>
        </authorList>
    </citation>
    <scope>NUCLEOTIDE SEQUENCE [LARGE SCALE GENOMIC DNA]</scope>
    <source>
        <strain>CVM19633</strain>
    </source>
</reference>
<dbReference type="EC" id="2.3.1.40" evidence="1"/>
<dbReference type="EC" id="6.2.1.20" evidence="1"/>
<dbReference type="EMBL" id="CP001127">
    <property type="protein sequence ID" value="ACF90819.1"/>
    <property type="molecule type" value="Genomic_DNA"/>
</dbReference>
<dbReference type="RefSeq" id="WP_000896093.1">
    <property type="nucleotide sequence ID" value="NC_011094.1"/>
</dbReference>
<dbReference type="SMR" id="B4TUM9"/>
<dbReference type="KEGG" id="sew:SeSA_A3175"/>
<dbReference type="HOGENOM" id="CLU_000022_59_8_6"/>
<dbReference type="Proteomes" id="UP000001865">
    <property type="component" value="Chromosome"/>
</dbReference>
<dbReference type="GO" id="GO:0005886">
    <property type="term" value="C:plasma membrane"/>
    <property type="evidence" value="ECO:0007669"/>
    <property type="project" value="UniProtKB-SubCell"/>
</dbReference>
<dbReference type="GO" id="GO:0008779">
    <property type="term" value="F:acyl-[acyl-carrier-protein]-phospholipid O-acyltransferase activity"/>
    <property type="evidence" value="ECO:0007669"/>
    <property type="project" value="UniProtKB-UniRule"/>
</dbReference>
<dbReference type="GO" id="GO:0005524">
    <property type="term" value="F:ATP binding"/>
    <property type="evidence" value="ECO:0007669"/>
    <property type="project" value="UniProtKB-KW"/>
</dbReference>
<dbReference type="GO" id="GO:0008922">
    <property type="term" value="F:long-chain fatty acid [acyl-carrier-protein] ligase activity"/>
    <property type="evidence" value="ECO:0007669"/>
    <property type="project" value="UniProtKB-UniRule"/>
</dbReference>
<dbReference type="GO" id="GO:0031956">
    <property type="term" value="F:medium-chain fatty acid-CoA ligase activity"/>
    <property type="evidence" value="ECO:0007669"/>
    <property type="project" value="TreeGrafter"/>
</dbReference>
<dbReference type="GO" id="GO:0006631">
    <property type="term" value="P:fatty acid metabolic process"/>
    <property type="evidence" value="ECO:0007669"/>
    <property type="project" value="InterPro"/>
</dbReference>
<dbReference type="GO" id="GO:0008654">
    <property type="term" value="P:phospholipid biosynthetic process"/>
    <property type="evidence" value="ECO:0007669"/>
    <property type="project" value="InterPro"/>
</dbReference>
<dbReference type="CDD" id="cd05909">
    <property type="entry name" value="AAS_C"/>
    <property type="match status" value="1"/>
</dbReference>
<dbReference type="CDD" id="cd07989">
    <property type="entry name" value="LPLAT_AGPAT-like"/>
    <property type="match status" value="1"/>
</dbReference>
<dbReference type="FunFam" id="3.30.300.30:FF:000009">
    <property type="entry name" value="Bifunctional protein Aas"/>
    <property type="match status" value="1"/>
</dbReference>
<dbReference type="FunFam" id="3.40.50.12780:FF:000009">
    <property type="entry name" value="Bifunctional protein Aas"/>
    <property type="match status" value="1"/>
</dbReference>
<dbReference type="Gene3D" id="3.30.300.30">
    <property type="match status" value="1"/>
</dbReference>
<dbReference type="Gene3D" id="3.40.50.12780">
    <property type="entry name" value="N-terminal domain of ligase-like"/>
    <property type="match status" value="1"/>
</dbReference>
<dbReference type="HAMAP" id="MF_01162">
    <property type="entry name" value="Aas"/>
    <property type="match status" value="1"/>
</dbReference>
<dbReference type="InterPro" id="IPR023775">
    <property type="entry name" value="Aas"/>
</dbReference>
<dbReference type="InterPro" id="IPR045851">
    <property type="entry name" value="AMP-bd_C_sf"/>
</dbReference>
<dbReference type="InterPro" id="IPR020845">
    <property type="entry name" value="AMP-binding_CS"/>
</dbReference>
<dbReference type="InterPro" id="IPR000873">
    <property type="entry name" value="AMP-dep_synth/lig_dom"/>
</dbReference>
<dbReference type="InterPro" id="IPR042099">
    <property type="entry name" value="ANL_N_sf"/>
</dbReference>
<dbReference type="InterPro" id="IPR002123">
    <property type="entry name" value="Plipid/glycerol_acylTrfase"/>
</dbReference>
<dbReference type="NCBIfam" id="NF005959">
    <property type="entry name" value="PRK08043.1"/>
    <property type="match status" value="1"/>
</dbReference>
<dbReference type="PANTHER" id="PTHR43201">
    <property type="entry name" value="ACYL-COA SYNTHETASE"/>
    <property type="match status" value="1"/>
</dbReference>
<dbReference type="PANTHER" id="PTHR43201:SF8">
    <property type="entry name" value="ACYL-COA SYNTHETASE FAMILY MEMBER 3"/>
    <property type="match status" value="1"/>
</dbReference>
<dbReference type="Pfam" id="PF01553">
    <property type="entry name" value="Acyltransferase"/>
    <property type="match status" value="1"/>
</dbReference>
<dbReference type="Pfam" id="PF00501">
    <property type="entry name" value="AMP-binding"/>
    <property type="match status" value="1"/>
</dbReference>
<dbReference type="SMART" id="SM00563">
    <property type="entry name" value="PlsC"/>
    <property type="match status" value="1"/>
</dbReference>
<dbReference type="SUPFAM" id="SSF56801">
    <property type="entry name" value="Acetyl-CoA synthetase-like"/>
    <property type="match status" value="1"/>
</dbReference>
<dbReference type="SUPFAM" id="SSF69593">
    <property type="entry name" value="Glycerol-3-phosphate (1)-acyltransferase"/>
    <property type="match status" value="1"/>
</dbReference>
<dbReference type="PROSITE" id="PS00455">
    <property type="entry name" value="AMP_BINDING"/>
    <property type="match status" value="1"/>
</dbReference>
<proteinExistence type="inferred from homology"/>
<evidence type="ECO:0000255" key="1">
    <source>
        <dbReference type="HAMAP-Rule" id="MF_01162"/>
    </source>
</evidence>
<keyword id="KW-0012">Acyltransferase</keyword>
<keyword id="KW-0067">ATP-binding</keyword>
<keyword id="KW-0997">Cell inner membrane</keyword>
<keyword id="KW-1003">Cell membrane</keyword>
<keyword id="KW-0436">Ligase</keyword>
<keyword id="KW-0472">Membrane</keyword>
<keyword id="KW-0511">Multifunctional enzyme</keyword>
<keyword id="KW-0547">Nucleotide-binding</keyword>
<keyword id="KW-0808">Transferase</keyword>
<keyword id="KW-0812">Transmembrane</keyword>
<keyword id="KW-1133">Transmembrane helix</keyword>
<name>AAS_SALSV</name>
<feature type="chain" id="PRO_1000137902" description="Bifunctional protein Aas">
    <location>
        <begin position="1"/>
        <end position="719"/>
    </location>
</feature>
<feature type="transmembrane region" description="Helical" evidence="1">
    <location>
        <begin position="258"/>
        <end position="277"/>
    </location>
</feature>
<feature type="transmembrane region" description="Helical" evidence="1">
    <location>
        <begin position="409"/>
        <end position="433"/>
    </location>
</feature>
<feature type="region of interest" description="Acyltransferase">
    <location>
        <begin position="15"/>
        <end position="138"/>
    </location>
</feature>
<feature type="region of interest" description="AMP-binding">
    <location>
        <begin position="233"/>
        <end position="646"/>
    </location>
</feature>
<feature type="active site" evidence="1">
    <location>
        <position position="36"/>
    </location>
</feature>